<organism>
    <name type="scientific">Granulibacter bethesdensis (strain ATCC BAA-1260 / CGDNIH1)</name>
    <dbReference type="NCBI Taxonomy" id="391165"/>
    <lineage>
        <taxon>Bacteria</taxon>
        <taxon>Pseudomonadati</taxon>
        <taxon>Pseudomonadota</taxon>
        <taxon>Alphaproteobacteria</taxon>
        <taxon>Acetobacterales</taxon>
        <taxon>Acetobacteraceae</taxon>
        <taxon>Granulibacter</taxon>
    </lineage>
</organism>
<accession>Q0BUN7</accession>
<comment type="function">
    <text evidence="1">Binds 16S rRNA, required for the assembly of 30S particles and may also be responsible for determining the conformation of the 16S rRNA at the A site.</text>
</comment>
<comment type="subunit">
    <text evidence="1">Part of the 30S ribosomal subunit. Contacts proteins S3 and S10.</text>
</comment>
<comment type="similarity">
    <text evidence="1">Belongs to the universal ribosomal protein uS14 family.</text>
</comment>
<comment type="sequence caution" evidence="3">
    <conflict type="erroneous initiation">
        <sequence resource="EMBL-CDS" id="ABI61465"/>
    </conflict>
</comment>
<feature type="chain" id="PRO_0000354384" description="Small ribosomal subunit protein uS14">
    <location>
        <begin position="1"/>
        <end position="101"/>
    </location>
</feature>
<feature type="region of interest" description="Disordered" evidence="2">
    <location>
        <begin position="1"/>
        <end position="20"/>
    </location>
</feature>
<feature type="compositionally biased region" description="Basic and acidic residues" evidence="2">
    <location>
        <begin position="11"/>
        <end position="20"/>
    </location>
</feature>
<evidence type="ECO:0000255" key="1">
    <source>
        <dbReference type="HAMAP-Rule" id="MF_00537"/>
    </source>
</evidence>
<evidence type="ECO:0000256" key="2">
    <source>
        <dbReference type="SAM" id="MobiDB-lite"/>
    </source>
</evidence>
<evidence type="ECO:0000305" key="3"/>
<sequence>MAKTSAVNRNKMRERMASRDKAKRAALKAIVMDRSLPVEDRFEATLRLAQLPRNGAANRVRLRCELTGRPRANYRKFKLCRVALRDLASSGQIPGLVKASW</sequence>
<dbReference type="EMBL" id="CP000394">
    <property type="protein sequence ID" value="ABI61465.1"/>
    <property type="status" value="ALT_INIT"/>
    <property type="molecule type" value="Genomic_DNA"/>
</dbReference>
<dbReference type="RefSeq" id="WP_025286096.1">
    <property type="nucleotide sequence ID" value="NC_008343.2"/>
</dbReference>
<dbReference type="SMR" id="Q0BUN7"/>
<dbReference type="STRING" id="391165.GbCGDNIH1_0567"/>
<dbReference type="GeneID" id="69744820"/>
<dbReference type="KEGG" id="gbe:GbCGDNIH1_0567"/>
<dbReference type="eggNOG" id="COG0199">
    <property type="taxonomic scope" value="Bacteria"/>
</dbReference>
<dbReference type="HOGENOM" id="CLU_139869_0_1_5"/>
<dbReference type="OrthoDB" id="9810484at2"/>
<dbReference type="Proteomes" id="UP000001963">
    <property type="component" value="Chromosome"/>
</dbReference>
<dbReference type="GO" id="GO:0005737">
    <property type="term" value="C:cytoplasm"/>
    <property type="evidence" value="ECO:0007669"/>
    <property type="project" value="UniProtKB-ARBA"/>
</dbReference>
<dbReference type="GO" id="GO:0015935">
    <property type="term" value="C:small ribosomal subunit"/>
    <property type="evidence" value="ECO:0007669"/>
    <property type="project" value="TreeGrafter"/>
</dbReference>
<dbReference type="GO" id="GO:0019843">
    <property type="term" value="F:rRNA binding"/>
    <property type="evidence" value="ECO:0007669"/>
    <property type="project" value="UniProtKB-UniRule"/>
</dbReference>
<dbReference type="GO" id="GO:0003735">
    <property type="term" value="F:structural constituent of ribosome"/>
    <property type="evidence" value="ECO:0007669"/>
    <property type="project" value="InterPro"/>
</dbReference>
<dbReference type="GO" id="GO:0006412">
    <property type="term" value="P:translation"/>
    <property type="evidence" value="ECO:0007669"/>
    <property type="project" value="UniProtKB-UniRule"/>
</dbReference>
<dbReference type="FunFam" id="1.10.287.1480:FF:000001">
    <property type="entry name" value="30S ribosomal protein S14"/>
    <property type="match status" value="1"/>
</dbReference>
<dbReference type="Gene3D" id="1.10.287.1480">
    <property type="match status" value="1"/>
</dbReference>
<dbReference type="HAMAP" id="MF_00537">
    <property type="entry name" value="Ribosomal_uS14_1"/>
    <property type="match status" value="1"/>
</dbReference>
<dbReference type="InterPro" id="IPR001209">
    <property type="entry name" value="Ribosomal_uS14"/>
</dbReference>
<dbReference type="InterPro" id="IPR023036">
    <property type="entry name" value="Ribosomal_uS14_bac/plastid"/>
</dbReference>
<dbReference type="InterPro" id="IPR018271">
    <property type="entry name" value="Ribosomal_uS14_CS"/>
</dbReference>
<dbReference type="NCBIfam" id="NF006477">
    <property type="entry name" value="PRK08881.1"/>
    <property type="match status" value="1"/>
</dbReference>
<dbReference type="PANTHER" id="PTHR19836">
    <property type="entry name" value="30S RIBOSOMAL PROTEIN S14"/>
    <property type="match status" value="1"/>
</dbReference>
<dbReference type="PANTHER" id="PTHR19836:SF19">
    <property type="entry name" value="SMALL RIBOSOMAL SUBUNIT PROTEIN US14M"/>
    <property type="match status" value="1"/>
</dbReference>
<dbReference type="Pfam" id="PF00253">
    <property type="entry name" value="Ribosomal_S14"/>
    <property type="match status" value="1"/>
</dbReference>
<dbReference type="SUPFAM" id="SSF57716">
    <property type="entry name" value="Glucocorticoid receptor-like (DNA-binding domain)"/>
    <property type="match status" value="1"/>
</dbReference>
<dbReference type="PROSITE" id="PS00527">
    <property type="entry name" value="RIBOSOMAL_S14"/>
    <property type="match status" value="1"/>
</dbReference>
<reference key="1">
    <citation type="journal article" date="2007" name="J. Bacteriol.">
        <title>Genome sequence analysis of the emerging human pathogenic acetic acid bacterium Granulibacter bethesdensis.</title>
        <authorList>
            <person name="Greenberg D.E."/>
            <person name="Porcella S.F."/>
            <person name="Zelazny A.M."/>
            <person name="Virtaneva K."/>
            <person name="Sturdevant D.E."/>
            <person name="Kupko J.J. III"/>
            <person name="Barbian K.D."/>
            <person name="Babar A."/>
            <person name="Dorward D.W."/>
            <person name="Holland S.M."/>
        </authorList>
    </citation>
    <scope>NUCLEOTIDE SEQUENCE [LARGE SCALE GENOMIC DNA]</scope>
    <source>
        <strain>ATCC BAA-1260 / CGDNIH1</strain>
    </source>
</reference>
<name>RS14_GRABC</name>
<keyword id="KW-1185">Reference proteome</keyword>
<keyword id="KW-0687">Ribonucleoprotein</keyword>
<keyword id="KW-0689">Ribosomal protein</keyword>
<keyword id="KW-0694">RNA-binding</keyword>
<keyword id="KW-0699">rRNA-binding</keyword>
<gene>
    <name evidence="1" type="primary">rpsN</name>
    <name type="ordered locus">GbCGDNIH1_0567</name>
</gene>
<proteinExistence type="inferred from homology"/>
<protein>
    <recommendedName>
        <fullName evidence="1">Small ribosomal subunit protein uS14</fullName>
    </recommendedName>
    <alternativeName>
        <fullName evidence="3">30S ribosomal protein S14</fullName>
    </alternativeName>
</protein>